<reference key="1">
    <citation type="journal article" date="1994" name="C. R. Acad. Sci. III, Sci. Vie">
        <title>Honeybees have putative olfactory receptor proteins similar to those of vertebrates.</title>
        <authorList>
            <person name="Danty E."/>
            <person name="Cornuet J.-M."/>
            <person name="Masson C."/>
        </authorList>
    </citation>
    <scope>NUCLEOTIDE SEQUENCE [MRNA]</scope>
    <source>
        <tissue>Antenna</tissue>
    </source>
</reference>
<dbReference type="EMBL" id="S76957">
    <property type="protein sequence ID" value="AAB33932.1"/>
    <property type="molecule type" value="mRNA"/>
</dbReference>
<dbReference type="SMR" id="Q26419"/>
<dbReference type="GO" id="GO:0005886">
    <property type="term" value="C:plasma membrane"/>
    <property type="evidence" value="ECO:0007669"/>
    <property type="project" value="UniProtKB-SubCell"/>
</dbReference>
<dbReference type="GO" id="GO:0004930">
    <property type="term" value="F:G protein-coupled receptor activity"/>
    <property type="evidence" value="ECO:0007669"/>
    <property type="project" value="UniProtKB-KW"/>
</dbReference>
<dbReference type="GO" id="GO:0004984">
    <property type="term" value="F:olfactory receptor activity"/>
    <property type="evidence" value="ECO:0007669"/>
    <property type="project" value="InterPro"/>
</dbReference>
<dbReference type="Gene3D" id="1.20.1070.10">
    <property type="entry name" value="Rhodopsin 7-helix transmembrane proteins"/>
    <property type="match status" value="1"/>
</dbReference>
<dbReference type="InterPro" id="IPR017452">
    <property type="entry name" value="GPCR_Rhodpsn_7TM"/>
</dbReference>
<dbReference type="InterPro" id="IPR000725">
    <property type="entry name" value="Olfact_rcpt"/>
</dbReference>
<dbReference type="PANTHER" id="PTHR48018">
    <property type="entry name" value="OLFACTORY RECEPTOR"/>
    <property type="match status" value="1"/>
</dbReference>
<dbReference type="Pfam" id="PF13853">
    <property type="entry name" value="7tm_4"/>
    <property type="match status" value="1"/>
</dbReference>
<dbReference type="PRINTS" id="PR00245">
    <property type="entry name" value="OLFACTORYR"/>
</dbReference>
<dbReference type="SUPFAM" id="SSF81321">
    <property type="entry name" value="Family A G protein-coupled receptor-like"/>
    <property type="match status" value="1"/>
</dbReference>
<dbReference type="PROSITE" id="PS50262">
    <property type="entry name" value="G_PROTEIN_RECEP_F1_2"/>
    <property type="match status" value="1"/>
</dbReference>
<sequence length="165" mass="18021">AICNPLLYSVAMSQRLCIQLVVGPYVIGLMNTMTHTTNAFCLPFCGPNVINPFFCDMSPFLSLVCADTRLNKLAVFIVAGAVGVFSGPTILISYIYILMAILRMSADGRCRTFSTCSSHPTAAFISYGTLFFIYVHPSATFSLDLNKVVSVFYTAVIPMLNPFIC</sequence>
<proteinExistence type="evidence at transcript level"/>
<evidence type="ECO:0000255" key="1"/>
<evidence type="ECO:0000255" key="2">
    <source>
        <dbReference type="PROSITE-ProRule" id="PRU00521"/>
    </source>
</evidence>
<evidence type="ECO:0000305" key="3"/>
<organism>
    <name type="scientific">Apis mellifera ligustica</name>
    <name type="common">Common honeybee</name>
    <name type="synonym">Italian honeybee</name>
    <dbReference type="NCBI Taxonomy" id="7469"/>
    <lineage>
        <taxon>Eukaryota</taxon>
        <taxon>Metazoa</taxon>
        <taxon>Ecdysozoa</taxon>
        <taxon>Arthropoda</taxon>
        <taxon>Hexapoda</taxon>
        <taxon>Insecta</taxon>
        <taxon>Pterygota</taxon>
        <taxon>Neoptera</taxon>
        <taxon>Endopterygota</taxon>
        <taxon>Hymenoptera</taxon>
        <taxon>Apocrita</taxon>
        <taxon>Aculeata</taxon>
        <taxon>Apoidea</taxon>
        <taxon>Anthophila</taxon>
        <taxon>Apidae</taxon>
        <taxon>Apis</taxon>
    </lineage>
</organism>
<protein>
    <recommendedName>
        <fullName>Olfactory receptor-like protein HbA1</fullName>
    </recommendedName>
</protein>
<comment type="function">
    <text evidence="3">Odorant receptor.</text>
</comment>
<comment type="subcellular location">
    <subcellularLocation>
        <location evidence="3">Cell membrane</location>
        <topology evidence="3">Multi-pass membrane protein</topology>
    </subcellularLocation>
</comment>
<comment type="similarity">
    <text evidence="2">Belongs to the G-protein coupled receptor 1 family.</text>
</comment>
<keyword id="KW-1003">Cell membrane</keyword>
<keyword id="KW-0297">G-protein coupled receptor</keyword>
<keyword id="KW-0472">Membrane</keyword>
<keyword id="KW-0552">Olfaction</keyword>
<keyword id="KW-0675">Receptor</keyword>
<keyword id="KW-0716">Sensory transduction</keyword>
<keyword id="KW-0807">Transducer</keyword>
<keyword id="KW-0812">Transmembrane</keyword>
<keyword id="KW-1133">Transmembrane helix</keyword>
<feature type="chain" id="PRO_0000150888" description="Olfactory receptor-like protein HbA1">
    <location>
        <begin position="1" status="less than"/>
        <end position="165" status="greater than"/>
    </location>
</feature>
<feature type="topological domain" description="Cytoplasmic" evidence="1">
    <location>
        <begin position="1" status="less than"/>
        <end position="15"/>
    </location>
</feature>
<feature type="transmembrane region" description="Helical; Name=4" evidence="1">
    <location>
        <begin position="16"/>
        <end position="36"/>
    </location>
</feature>
<feature type="topological domain" description="Extracellular" evidence="1">
    <location>
        <begin position="37"/>
        <end position="43"/>
    </location>
</feature>
<feature type="transmembrane region" description="Helical; Name=5" evidence="1">
    <location>
        <begin position="44"/>
        <end position="64"/>
    </location>
</feature>
<feature type="topological domain" description="Cytoplasmic" evidence="1">
    <location>
        <begin position="65"/>
        <end position="72"/>
    </location>
</feature>
<feature type="transmembrane region" description="Helical; Name=6" evidence="1">
    <location>
        <begin position="73"/>
        <end position="93"/>
    </location>
</feature>
<feature type="topological domain" description="Extracellular" evidence="1">
    <location>
        <begin position="94"/>
        <end position="122"/>
    </location>
</feature>
<feature type="transmembrane region" description="Helical; Name=7" evidence="1">
    <location>
        <begin position="123"/>
        <end position="143"/>
    </location>
</feature>
<feature type="topological domain" description="Cytoplasmic" evidence="1">
    <location>
        <begin position="144"/>
        <end position="165" status="greater than"/>
    </location>
</feature>
<feature type="non-terminal residue">
    <location>
        <position position="1"/>
    </location>
</feature>
<feature type="non-terminal residue">
    <location>
        <position position="165"/>
    </location>
</feature>
<accession>Q26419</accession>
<name>OLF1_APILI</name>